<reference key="1">
    <citation type="journal article" date="2003" name="Nature">
        <title>The genome sequence of Bacillus anthracis Ames and comparison to closely related bacteria.</title>
        <authorList>
            <person name="Read T.D."/>
            <person name="Peterson S.N."/>
            <person name="Tourasse N.J."/>
            <person name="Baillie L.W."/>
            <person name="Paulsen I.T."/>
            <person name="Nelson K.E."/>
            <person name="Tettelin H."/>
            <person name="Fouts D.E."/>
            <person name="Eisen J.A."/>
            <person name="Gill S.R."/>
            <person name="Holtzapple E.K."/>
            <person name="Okstad O.A."/>
            <person name="Helgason E."/>
            <person name="Rilstone J."/>
            <person name="Wu M."/>
            <person name="Kolonay J.F."/>
            <person name="Beanan M.J."/>
            <person name="Dodson R.J."/>
            <person name="Brinkac L.M."/>
            <person name="Gwinn M.L."/>
            <person name="DeBoy R.T."/>
            <person name="Madpu R."/>
            <person name="Daugherty S.C."/>
            <person name="Durkin A.S."/>
            <person name="Haft D.H."/>
            <person name="Nelson W.C."/>
            <person name="Peterson J.D."/>
            <person name="Pop M."/>
            <person name="Khouri H.M."/>
            <person name="Radune D."/>
            <person name="Benton J.L."/>
            <person name="Mahamoud Y."/>
            <person name="Jiang L."/>
            <person name="Hance I.R."/>
            <person name="Weidman J.F."/>
            <person name="Berry K.J."/>
            <person name="Plaut R.D."/>
            <person name="Wolf A.M."/>
            <person name="Watkins K.L."/>
            <person name="Nierman W.C."/>
            <person name="Hazen A."/>
            <person name="Cline R.T."/>
            <person name="Redmond C."/>
            <person name="Thwaite J.E."/>
            <person name="White O."/>
            <person name="Salzberg S.L."/>
            <person name="Thomason B."/>
            <person name="Friedlander A.M."/>
            <person name="Koehler T.M."/>
            <person name="Hanna P.C."/>
            <person name="Kolstoe A.-B."/>
            <person name="Fraser C.M."/>
        </authorList>
    </citation>
    <scope>NUCLEOTIDE SEQUENCE [LARGE SCALE GENOMIC DNA]</scope>
    <source>
        <strain>Ames / isolate Porton</strain>
    </source>
</reference>
<reference key="2">
    <citation type="journal article" date="2009" name="J. Bacteriol.">
        <title>The complete genome sequence of Bacillus anthracis Ames 'Ancestor'.</title>
        <authorList>
            <person name="Ravel J."/>
            <person name="Jiang L."/>
            <person name="Stanley S.T."/>
            <person name="Wilson M.R."/>
            <person name="Decker R.S."/>
            <person name="Read T.D."/>
            <person name="Worsham P."/>
            <person name="Keim P.S."/>
            <person name="Salzberg S.L."/>
            <person name="Fraser-Liggett C.M."/>
            <person name="Rasko D.A."/>
        </authorList>
    </citation>
    <scope>NUCLEOTIDE SEQUENCE [LARGE SCALE GENOMIC DNA]</scope>
    <source>
        <strain>Ames ancestor</strain>
    </source>
</reference>
<reference key="3">
    <citation type="submission" date="2004-01" db="EMBL/GenBank/DDBJ databases">
        <title>Complete genome sequence of Bacillus anthracis Sterne.</title>
        <authorList>
            <person name="Brettin T.S."/>
            <person name="Bruce D."/>
            <person name="Challacombe J.F."/>
            <person name="Gilna P."/>
            <person name="Han C."/>
            <person name="Hill K."/>
            <person name="Hitchcock P."/>
            <person name="Jackson P."/>
            <person name="Keim P."/>
            <person name="Longmire J."/>
            <person name="Lucas S."/>
            <person name="Okinaka R."/>
            <person name="Richardson P."/>
            <person name="Rubin E."/>
            <person name="Tice H."/>
        </authorList>
    </citation>
    <scope>NUCLEOTIDE SEQUENCE [LARGE SCALE GENOMIC DNA]</scope>
    <source>
        <strain>Sterne</strain>
    </source>
</reference>
<sequence length="227" mass="26966">MDIERINDHTMKFFITYIDIEDRGFNREEIWYDRERSEELFWEMMDEARDHDDFFIDGPLWIQVQAVDKGIEVLVTKAELSKDGQKLELPIGVDKIIDIPLDEGIESLFQQELVEEVEEQAGTNFNEDGTFGFLIKFNDFEDVISLSHRLIFEDIKDELYSFEDRYYVYVEFDEVLHDEEEIDRILSIVLEYGEESTLTIHRVSEYGKQIVKEHALETIRNNFPAKT</sequence>
<accession>Q81TR3</accession>
<accession>Q6I1Z7</accession>
<accession>Q6KVT6</accession>
<protein>
    <recommendedName>
        <fullName>Adapter protein MecA 1</fullName>
    </recommendedName>
</protein>
<proteinExistence type="inferred from homology"/>
<name>MECA1_BACAN</name>
<gene>
    <name type="primary">mecA1</name>
    <name type="synonym">mecA</name>
    <name type="ordered locus">BA_1203</name>
    <name type="ordered locus">GBAA_1203</name>
    <name type="ordered locus">BAS1111</name>
</gene>
<dbReference type="EMBL" id="AE016879">
    <property type="protein sequence ID" value="AAP25164.2"/>
    <property type="molecule type" value="Genomic_DNA"/>
</dbReference>
<dbReference type="EMBL" id="AE017334">
    <property type="protein sequence ID" value="AAT30290.1"/>
    <property type="status" value="ALT_INIT"/>
    <property type="molecule type" value="Genomic_DNA"/>
</dbReference>
<dbReference type="EMBL" id="AE017225">
    <property type="protein sequence ID" value="AAT53434.1"/>
    <property type="molecule type" value="Genomic_DNA"/>
</dbReference>
<dbReference type="RefSeq" id="NP_843678.2">
    <property type="nucleotide sequence ID" value="NC_003997.3"/>
</dbReference>
<dbReference type="RefSeq" id="WP_000350710.1">
    <property type="nucleotide sequence ID" value="NZ_WXXJ01000044.1"/>
</dbReference>
<dbReference type="RefSeq" id="YP_027383.1">
    <property type="nucleotide sequence ID" value="NC_005945.1"/>
</dbReference>
<dbReference type="SMR" id="Q81TR3"/>
<dbReference type="STRING" id="261594.GBAA_1203"/>
<dbReference type="DNASU" id="1089261"/>
<dbReference type="GeneID" id="93009840"/>
<dbReference type="KEGG" id="ban:BA_1203"/>
<dbReference type="KEGG" id="bar:GBAA_1203"/>
<dbReference type="KEGG" id="bat:BAS1111"/>
<dbReference type="PATRIC" id="fig|198094.11.peg.1180"/>
<dbReference type="eggNOG" id="COG4862">
    <property type="taxonomic scope" value="Bacteria"/>
</dbReference>
<dbReference type="HOGENOM" id="CLU_071496_2_1_9"/>
<dbReference type="OMA" id="EFFYTVM"/>
<dbReference type="OrthoDB" id="2360201at2"/>
<dbReference type="Proteomes" id="UP000000427">
    <property type="component" value="Chromosome"/>
</dbReference>
<dbReference type="Proteomes" id="UP000000594">
    <property type="component" value="Chromosome"/>
</dbReference>
<dbReference type="GO" id="GO:0030674">
    <property type="term" value="F:protein-macromolecule adaptor activity"/>
    <property type="evidence" value="ECO:0007669"/>
    <property type="project" value="UniProtKB-UniRule"/>
</dbReference>
<dbReference type="GO" id="GO:0030420">
    <property type="term" value="P:establishment of competence for transformation"/>
    <property type="evidence" value="ECO:0007669"/>
    <property type="project" value="UniProtKB-KW"/>
</dbReference>
<dbReference type="GO" id="GO:0045808">
    <property type="term" value="P:negative regulation of establishment of competence for transformation"/>
    <property type="evidence" value="ECO:0007669"/>
    <property type="project" value="UniProtKB-UniRule"/>
</dbReference>
<dbReference type="GO" id="GO:0042174">
    <property type="term" value="P:negative regulation of sporulation resulting in formation of a cellular spore"/>
    <property type="evidence" value="ECO:0007669"/>
    <property type="project" value="UniProtKB-UniRule"/>
</dbReference>
<dbReference type="GO" id="GO:0030435">
    <property type="term" value="P:sporulation resulting in formation of a cellular spore"/>
    <property type="evidence" value="ECO:0007669"/>
    <property type="project" value="UniProtKB-KW"/>
</dbReference>
<dbReference type="FunFam" id="3.30.70.1950:FF:000002">
    <property type="entry name" value="Adapter protein MecA"/>
    <property type="match status" value="1"/>
</dbReference>
<dbReference type="Gene3D" id="3.30.70.1950">
    <property type="match status" value="1"/>
</dbReference>
<dbReference type="HAMAP" id="MF_01124">
    <property type="entry name" value="MecA"/>
    <property type="match status" value="1"/>
</dbReference>
<dbReference type="InterPro" id="IPR038471">
    <property type="entry name" value="MecA_C_sf"/>
</dbReference>
<dbReference type="InterPro" id="IPR008681">
    <property type="entry name" value="Neg-reg_MecA"/>
</dbReference>
<dbReference type="NCBIfam" id="NF002641">
    <property type="entry name" value="PRK02315.1-1"/>
    <property type="match status" value="1"/>
</dbReference>
<dbReference type="NCBIfam" id="NF002644">
    <property type="entry name" value="PRK02315.1-5"/>
    <property type="match status" value="1"/>
</dbReference>
<dbReference type="PANTHER" id="PTHR39161">
    <property type="entry name" value="ADAPTER PROTEIN MECA"/>
    <property type="match status" value="1"/>
</dbReference>
<dbReference type="PANTHER" id="PTHR39161:SF1">
    <property type="entry name" value="ADAPTER PROTEIN MECA 1"/>
    <property type="match status" value="1"/>
</dbReference>
<dbReference type="Pfam" id="PF05389">
    <property type="entry name" value="MecA"/>
    <property type="match status" value="1"/>
</dbReference>
<dbReference type="PIRSF" id="PIRSF029008">
    <property type="entry name" value="MecA"/>
    <property type="match status" value="1"/>
</dbReference>
<keyword id="KW-0178">Competence</keyword>
<keyword id="KW-1185">Reference proteome</keyword>
<keyword id="KW-0749">Sporulation</keyword>
<evidence type="ECO:0000250" key="1"/>
<evidence type="ECO:0000305" key="2"/>
<comment type="function">
    <text evidence="1">Enables the recognition and targeting of unfolded and aggregated proteins to the ClpC protease or to other proteins involved in proteolysis. Acts negatively in the development of competence by binding ComK and recruiting it to the ClpCP protease. When overexpressed, inhibits sporulation. Also involved in Spx degradation by ClpC (By similarity).</text>
</comment>
<comment type="subunit">
    <text evidence="1">Homodimer.</text>
</comment>
<comment type="domain">
    <text>The N-terminal domain has binding sites for ComK and probably for unfolded/aggregated proteins; the C-terminal domain interacts with ClpC.</text>
</comment>
<comment type="similarity">
    <text evidence="2">Belongs to the MecA family.</text>
</comment>
<comment type="sequence caution" evidence="2">
    <conflict type="erroneous initiation">
        <sequence resource="EMBL-CDS" id="AAT30290"/>
    </conflict>
    <text>Truncated N-terminus.</text>
</comment>
<organism>
    <name type="scientific">Bacillus anthracis</name>
    <dbReference type="NCBI Taxonomy" id="1392"/>
    <lineage>
        <taxon>Bacteria</taxon>
        <taxon>Bacillati</taxon>
        <taxon>Bacillota</taxon>
        <taxon>Bacilli</taxon>
        <taxon>Bacillales</taxon>
        <taxon>Bacillaceae</taxon>
        <taxon>Bacillus</taxon>
        <taxon>Bacillus cereus group</taxon>
    </lineage>
</organism>
<feature type="chain" id="PRO_0000212260" description="Adapter protein MecA 1">
    <location>
        <begin position="1"/>
        <end position="227"/>
    </location>
</feature>